<reference key="1">
    <citation type="journal article" date="1998" name="Nature">
        <title>The complete genome of the hyperthermophilic bacterium Aquifex aeolicus.</title>
        <authorList>
            <person name="Deckert G."/>
            <person name="Warren P.V."/>
            <person name="Gaasterland T."/>
            <person name="Young W.G."/>
            <person name="Lenox A.L."/>
            <person name="Graham D.E."/>
            <person name="Overbeek R."/>
            <person name="Snead M.A."/>
            <person name="Keller M."/>
            <person name="Aujay M."/>
            <person name="Huber R."/>
            <person name="Feldman R.A."/>
            <person name="Short J.M."/>
            <person name="Olsen G.J."/>
            <person name="Swanson R.V."/>
        </authorList>
    </citation>
    <scope>NUCLEOTIDE SEQUENCE [LARGE SCALE GENOMIC DNA]</scope>
    <source>
        <strain>VF5</strain>
    </source>
</reference>
<evidence type="ECO:0000255" key="1">
    <source>
        <dbReference type="HAMAP-Rule" id="MF_01326"/>
    </source>
</evidence>
<evidence type="ECO:0000305" key="2"/>
<gene>
    <name evidence="1" type="primary">rplX</name>
    <name type="ordered locus">aq_1653</name>
</gene>
<keyword id="KW-1185">Reference proteome</keyword>
<keyword id="KW-0687">Ribonucleoprotein</keyword>
<keyword id="KW-0689">Ribosomal protein</keyword>
<keyword id="KW-0694">RNA-binding</keyword>
<keyword id="KW-0699">rRNA-binding</keyword>
<comment type="function">
    <text evidence="1">One of two assembly initiator proteins, it binds directly to the 5'-end of the 23S rRNA, where it nucleates assembly of the 50S subunit.</text>
</comment>
<comment type="function">
    <text evidence="1">One of the proteins that surrounds the polypeptide exit tunnel on the outside of the subunit.</text>
</comment>
<comment type="subunit">
    <text evidence="1">Part of the 50S ribosomal subunit.</text>
</comment>
<comment type="similarity">
    <text evidence="1">Belongs to the universal ribosomal protein uL24 family.</text>
</comment>
<dbReference type="EMBL" id="AE000657">
    <property type="protein sequence ID" value="AAC07534.1"/>
    <property type="molecule type" value="Genomic_DNA"/>
</dbReference>
<dbReference type="PIR" id="H70442">
    <property type="entry name" value="H70442"/>
</dbReference>
<dbReference type="RefSeq" id="NP_214135.1">
    <property type="nucleotide sequence ID" value="NC_000918.1"/>
</dbReference>
<dbReference type="RefSeq" id="WP_010881072.1">
    <property type="nucleotide sequence ID" value="NC_000918.1"/>
</dbReference>
<dbReference type="SMR" id="O67569"/>
<dbReference type="FunCoup" id="O67569">
    <property type="interactions" value="491"/>
</dbReference>
<dbReference type="STRING" id="224324.aq_1653"/>
<dbReference type="EnsemblBacteria" id="AAC07534">
    <property type="protein sequence ID" value="AAC07534"/>
    <property type="gene ID" value="aq_1653"/>
</dbReference>
<dbReference type="KEGG" id="aae:aq_1653"/>
<dbReference type="PATRIC" id="fig|224324.8.peg.1275"/>
<dbReference type="eggNOG" id="COG0198">
    <property type="taxonomic scope" value="Bacteria"/>
</dbReference>
<dbReference type="HOGENOM" id="CLU_093315_2_0_0"/>
<dbReference type="InParanoid" id="O67569"/>
<dbReference type="OrthoDB" id="9807419at2"/>
<dbReference type="Proteomes" id="UP000000798">
    <property type="component" value="Chromosome"/>
</dbReference>
<dbReference type="GO" id="GO:0022625">
    <property type="term" value="C:cytosolic large ribosomal subunit"/>
    <property type="evidence" value="ECO:0000318"/>
    <property type="project" value="GO_Central"/>
</dbReference>
<dbReference type="GO" id="GO:0019843">
    <property type="term" value="F:rRNA binding"/>
    <property type="evidence" value="ECO:0007669"/>
    <property type="project" value="UniProtKB-UniRule"/>
</dbReference>
<dbReference type="GO" id="GO:0003735">
    <property type="term" value="F:structural constituent of ribosome"/>
    <property type="evidence" value="ECO:0007669"/>
    <property type="project" value="InterPro"/>
</dbReference>
<dbReference type="GO" id="GO:0006412">
    <property type="term" value="P:translation"/>
    <property type="evidence" value="ECO:0000318"/>
    <property type="project" value="GO_Central"/>
</dbReference>
<dbReference type="CDD" id="cd06089">
    <property type="entry name" value="KOW_RPL26"/>
    <property type="match status" value="1"/>
</dbReference>
<dbReference type="FunFam" id="2.30.30.30:FF:000051">
    <property type="entry name" value="50S ribosomal protein L24"/>
    <property type="match status" value="1"/>
</dbReference>
<dbReference type="Gene3D" id="2.30.30.30">
    <property type="match status" value="1"/>
</dbReference>
<dbReference type="HAMAP" id="MF_01326_B">
    <property type="entry name" value="Ribosomal_uL24_B"/>
    <property type="match status" value="1"/>
</dbReference>
<dbReference type="InterPro" id="IPR005824">
    <property type="entry name" value="KOW"/>
</dbReference>
<dbReference type="InterPro" id="IPR014722">
    <property type="entry name" value="Rib_uL2_dom2"/>
</dbReference>
<dbReference type="InterPro" id="IPR003256">
    <property type="entry name" value="Ribosomal_uL24"/>
</dbReference>
<dbReference type="InterPro" id="IPR005825">
    <property type="entry name" value="Ribosomal_uL24_CS"/>
</dbReference>
<dbReference type="InterPro" id="IPR041988">
    <property type="entry name" value="Ribosomal_uL24_KOW"/>
</dbReference>
<dbReference type="InterPro" id="IPR008991">
    <property type="entry name" value="Translation_prot_SH3-like_sf"/>
</dbReference>
<dbReference type="NCBIfam" id="TIGR01079">
    <property type="entry name" value="rplX_bact"/>
    <property type="match status" value="1"/>
</dbReference>
<dbReference type="PANTHER" id="PTHR12903">
    <property type="entry name" value="MITOCHONDRIAL RIBOSOMAL PROTEIN L24"/>
    <property type="match status" value="1"/>
</dbReference>
<dbReference type="Pfam" id="PF00467">
    <property type="entry name" value="KOW"/>
    <property type="match status" value="1"/>
</dbReference>
<dbReference type="Pfam" id="PF17136">
    <property type="entry name" value="ribosomal_L24"/>
    <property type="match status" value="1"/>
</dbReference>
<dbReference type="SMART" id="SM00739">
    <property type="entry name" value="KOW"/>
    <property type="match status" value="1"/>
</dbReference>
<dbReference type="SUPFAM" id="SSF50104">
    <property type="entry name" value="Translation proteins SH3-like domain"/>
    <property type="match status" value="1"/>
</dbReference>
<dbReference type="PROSITE" id="PS01108">
    <property type="entry name" value="RIBOSOMAL_L24"/>
    <property type="match status" value="1"/>
</dbReference>
<organism>
    <name type="scientific">Aquifex aeolicus (strain VF5)</name>
    <dbReference type="NCBI Taxonomy" id="224324"/>
    <lineage>
        <taxon>Bacteria</taxon>
        <taxon>Pseudomonadati</taxon>
        <taxon>Aquificota</taxon>
        <taxon>Aquificia</taxon>
        <taxon>Aquificales</taxon>
        <taxon>Aquificaceae</taxon>
        <taxon>Aquifex</taxon>
    </lineage>
</organism>
<sequence length="132" mass="14942">MAAAKIKKGDTVLVVRGKEKGKQGKVLKVYERVKRRDKQGNPVYVRHFVIVEGVRLIKKHVKPIEGVREGGIIETEGPIDISNVMLICPNCNKPTRVGFRIVEEGNVRRKYRYCKKCNENIDLVSEKVIKGG</sequence>
<feature type="chain" id="PRO_0000130617" description="Large ribosomal subunit protein uL24">
    <location>
        <begin position="1"/>
        <end position="132"/>
    </location>
</feature>
<protein>
    <recommendedName>
        <fullName evidence="1">Large ribosomal subunit protein uL24</fullName>
    </recommendedName>
    <alternativeName>
        <fullName evidence="2">50S ribosomal protein L24</fullName>
    </alternativeName>
</protein>
<proteinExistence type="inferred from homology"/>
<accession>O67569</accession>
<name>RL24_AQUAE</name>